<reference key="1">
    <citation type="submission" date="2005-03" db="EMBL/GenBank/DDBJ databases">
        <title>Comparison of the complete genome sequences of Rhodococcus erythropolis PR4 and Rhodococcus opacus B4.</title>
        <authorList>
            <person name="Takarada H."/>
            <person name="Sekine M."/>
            <person name="Hosoyama A."/>
            <person name="Yamada R."/>
            <person name="Fujisawa T."/>
            <person name="Omata S."/>
            <person name="Shimizu A."/>
            <person name="Tsukatani N."/>
            <person name="Tanikawa S."/>
            <person name="Fujita N."/>
            <person name="Harayama S."/>
        </authorList>
    </citation>
    <scope>NUCLEOTIDE SEQUENCE [LARGE SCALE GENOMIC DNA]</scope>
    <source>
        <strain>PR4 / NBRC 100887</strain>
    </source>
</reference>
<keyword id="KW-0067">ATP-binding</keyword>
<keyword id="KW-0173">Coenzyme A biosynthesis</keyword>
<keyword id="KW-0963">Cytoplasm</keyword>
<keyword id="KW-0418">Kinase</keyword>
<keyword id="KW-0479">Metal-binding</keyword>
<keyword id="KW-0547">Nucleotide-binding</keyword>
<keyword id="KW-0630">Potassium</keyword>
<keyword id="KW-0808">Transferase</keyword>
<comment type="function">
    <text evidence="1">Catalyzes the phosphorylation of pantothenate (Pan), the first step in CoA biosynthesis.</text>
</comment>
<comment type="catalytic activity">
    <reaction evidence="1">
        <text>(R)-pantothenate + ATP = (R)-4'-phosphopantothenate + ADP + H(+)</text>
        <dbReference type="Rhea" id="RHEA:16373"/>
        <dbReference type="ChEBI" id="CHEBI:10986"/>
        <dbReference type="ChEBI" id="CHEBI:15378"/>
        <dbReference type="ChEBI" id="CHEBI:29032"/>
        <dbReference type="ChEBI" id="CHEBI:30616"/>
        <dbReference type="ChEBI" id="CHEBI:456216"/>
        <dbReference type="EC" id="2.7.1.33"/>
    </reaction>
</comment>
<comment type="cofactor">
    <cofactor evidence="1">
        <name>NH4(+)</name>
        <dbReference type="ChEBI" id="CHEBI:28938"/>
    </cofactor>
    <cofactor evidence="1">
        <name>K(+)</name>
        <dbReference type="ChEBI" id="CHEBI:29103"/>
    </cofactor>
    <text evidence="1">A monovalent cation. Ammonium or potassium.</text>
</comment>
<comment type="pathway">
    <text evidence="1">Cofactor biosynthesis; coenzyme A biosynthesis; CoA from (R)-pantothenate: step 1/5.</text>
</comment>
<comment type="subunit">
    <text evidence="1">Homodimer.</text>
</comment>
<comment type="subcellular location">
    <subcellularLocation>
        <location evidence="1">Cytoplasm</location>
    </subcellularLocation>
</comment>
<comment type="similarity">
    <text evidence="1">Belongs to the type III pantothenate kinase family.</text>
</comment>
<name>COAX_RHOE4</name>
<accession>C0ZPL5</accession>
<organism>
    <name type="scientific">Rhodococcus erythropolis (strain PR4 / NBRC 100887)</name>
    <dbReference type="NCBI Taxonomy" id="234621"/>
    <lineage>
        <taxon>Bacteria</taxon>
        <taxon>Bacillati</taxon>
        <taxon>Actinomycetota</taxon>
        <taxon>Actinomycetes</taxon>
        <taxon>Mycobacteriales</taxon>
        <taxon>Nocardiaceae</taxon>
        <taxon>Rhodococcus</taxon>
        <taxon>Rhodococcus erythropolis group</taxon>
    </lineage>
</organism>
<protein>
    <recommendedName>
        <fullName evidence="1">Type III pantothenate kinase</fullName>
        <ecNumber evidence="1">2.7.1.33</ecNumber>
    </recommendedName>
    <alternativeName>
        <fullName evidence="1">PanK-III</fullName>
    </alternativeName>
    <alternativeName>
        <fullName evidence="1">Pantothenic acid kinase</fullName>
    </alternativeName>
</protein>
<sequence>MLLTVDVRNTNIVLGLFSGTGEYSKLLQDWRMRTDPRMTADELALTFRGLLGTHVDEITGVAALSTVPSVLREIRVMLERYWGHVPHVVVEPGIRTGVPLLVDNPKEVGADRIVNSLAAHHLYEGPCIVVDFGTSTCVDVVSAKGEFLGGCIAPGLEISTDALASQSAALRKVELVRPRSVVGKNTVECMQSGAVFGFAGLVDGLVNRVRDELPEFGGDDVSVIATGDSAPLIIPESDTIDHLERDLTLEGLRLVFERNQARRGSGRRPVA</sequence>
<proteinExistence type="inferred from homology"/>
<evidence type="ECO:0000255" key="1">
    <source>
        <dbReference type="HAMAP-Rule" id="MF_01274"/>
    </source>
</evidence>
<gene>
    <name evidence="1" type="primary">coaX</name>
    <name type="ordered locus">RER_06350</name>
</gene>
<feature type="chain" id="PRO_1000214194" description="Type III pantothenate kinase">
    <location>
        <begin position="1"/>
        <end position="271"/>
    </location>
</feature>
<feature type="active site" description="Proton acceptor" evidence="1">
    <location>
        <position position="111"/>
    </location>
</feature>
<feature type="binding site" evidence="1">
    <location>
        <begin position="6"/>
        <end position="13"/>
    </location>
    <ligand>
        <name>ATP</name>
        <dbReference type="ChEBI" id="CHEBI:30616"/>
    </ligand>
</feature>
<feature type="binding site" evidence="1">
    <location>
        <begin position="109"/>
        <end position="112"/>
    </location>
    <ligand>
        <name>substrate</name>
    </ligand>
</feature>
<feature type="binding site" evidence="1">
    <location>
        <position position="131"/>
    </location>
    <ligand>
        <name>K(+)</name>
        <dbReference type="ChEBI" id="CHEBI:29103"/>
    </ligand>
</feature>
<feature type="binding site" evidence="1">
    <location>
        <position position="134"/>
    </location>
    <ligand>
        <name>ATP</name>
        <dbReference type="ChEBI" id="CHEBI:30616"/>
    </ligand>
</feature>
<feature type="binding site" evidence="1">
    <location>
        <position position="186"/>
    </location>
    <ligand>
        <name>substrate</name>
    </ligand>
</feature>
<dbReference type="EC" id="2.7.1.33" evidence="1"/>
<dbReference type="EMBL" id="AP008957">
    <property type="protein sequence ID" value="BAH31343.1"/>
    <property type="molecule type" value="Genomic_DNA"/>
</dbReference>
<dbReference type="RefSeq" id="WP_019746791.1">
    <property type="nucleotide sequence ID" value="NC_012490.1"/>
</dbReference>
<dbReference type="SMR" id="C0ZPL5"/>
<dbReference type="KEGG" id="rer:RER_06350"/>
<dbReference type="eggNOG" id="COG1521">
    <property type="taxonomic scope" value="Bacteria"/>
</dbReference>
<dbReference type="HOGENOM" id="CLU_066627_1_0_11"/>
<dbReference type="UniPathway" id="UPA00241">
    <property type="reaction ID" value="UER00352"/>
</dbReference>
<dbReference type="Proteomes" id="UP000002204">
    <property type="component" value="Chromosome"/>
</dbReference>
<dbReference type="GO" id="GO:0005737">
    <property type="term" value="C:cytoplasm"/>
    <property type="evidence" value="ECO:0007669"/>
    <property type="project" value="UniProtKB-SubCell"/>
</dbReference>
<dbReference type="GO" id="GO:0005524">
    <property type="term" value="F:ATP binding"/>
    <property type="evidence" value="ECO:0007669"/>
    <property type="project" value="UniProtKB-UniRule"/>
</dbReference>
<dbReference type="GO" id="GO:0046872">
    <property type="term" value="F:metal ion binding"/>
    <property type="evidence" value="ECO:0007669"/>
    <property type="project" value="UniProtKB-KW"/>
</dbReference>
<dbReference type="GO" id="GO:0004594">
    <property type="term" value="F:pantothenate kinase activity"/>
    <property type="evidence" value="ECO:0007669"/>
    <property type="project" value="UniProtKB-UniRule"/>
</dbReference>
<dbReference type="GO" id="GO:0015937">
    <property type="term" value="P:coenzyme A biosynthetic process"/>
    <property type="evidence" value="ECO:0007669"/>
    <property type="project" value="UniProtKB-UniRule"/>
</dbReference>
<dbReference type="CDD" id="cd24015">
    <property type="entry name" value="ASKHA_NBD_PanK-III"/>
    <property type="match status" value="1"/>
</dbReference>
<dbReference type="Gene3D" id="3.30.420.40">
    <property type="match status" value="2"/>
</dbReference>
<dbReference type="HAMAP" id="MF_01274">
    <property type="entry name" value="Pantothen_kinase_3"/>
    <property type="match status" value="1"/>
</dbReference>
<dbReference type="InterPro" id="IPR043129">
    <property type="entry name" value="ATPase_NBD"/>
</dbReference>
<dbReference type="InterPro" id="IPR004619">
    <property type="entry name" value="Type_III_PanK"/>
</dbReference>
<dbReference type="NCBIfam" id="TIGR00671">
    <property type="entry name" value="baf"/>
    <property type="match status" value="1"/>
</dbReference>
<dbReference type="NCBIfam" id="NF009845">
    <property type="entry name" value="PRK13318.1-3"/>
    <property type="match status" value="1"/>
</dbReference>
<dbReference type="NCBIfam" id="NF009855">
    <property type="entry name" value="PRK13321.1"/>
    <property type="match status" value="1"/>
</dbReference>
<dbReference type="PANTHER" id="PTHR34265">
    <property type="entry name" value="TYPE III PANTOTHENATE KINASE"/>
    <property type="match status" value="1"/>
</dbReference>
<dbReference type="PANTHER" id="PTHR34265:SF1">
    <property type="entry name" value="TYPE III PANTOTHENATE KINASE"/>
    <property type="match status" value="1"/>
</dbReference>
<dbReference type="Pfam" id="PF03309">
    <property type="entry name" value="Pan_kinase"/>
    <property type="match status" value="1"/>
</dbReference>
<dbReference type="SUPFAM" id="SSF53067">
    <property type="entry name" value="Actin-like ATPase domain"/>
    <property type="match status" value="2"/>
</dbReference>